<evidence type="ECO:0000255" key="1">
    <source>
        <dbReference type="HAMAP-Rule" id="MF_01395"/>
    </source>
</evidence>
<evidence type="ECO:0000255" key="2">
    <source>
        <dbReference type="PROSITE-ProRule" id="PRU01136"/>
    </source>
</evidence>
<evidence type="ECO:0000256" key="3">
    <source>
        <dbReference type="SAM" id="MobiDB-lite"/>
    </source>
</evidence>
<dbReference type="EC" id="2.1.3.15" evidence="1"/>
<dbReference type="EMBL" id="CP000817">
    <property type="protein sequence ID" value="ACA41593.1"/>
    <property type="molecule type" value="Genomic_DNA"/>
</dbReference>
<dbReference type="SMR" id="B1HX17"/>
<dbReference type="EnsemblBacteria" id="ACA41593">
    <property type="protein sequence ID" value="ACA41593"/>
    <property type="gene ID" value="Bsph_4132"/>
</dbReference>
<dbReference type="KEGG" id="lsp:Bsph_4132"/>
<dbReference type="HOGENOM" id="CLU_015486_1_1_9"/>
<dbReference type="UniPathway" id="UPA00655">
    <property type="reaction ID" value="UER00711"/>
</dbReference>
<dbReference type="Proteomes" id="UP000002164">
    <property type="component" value="Chromosome"/>
</dbReference>
<dbReference type="GO" id="GO:0009317">
    <property type="term" value="C:acetyl-CoA carboxylase complex"/>
    <property type="evidence" value="ECO:0007669"/>
    <property type="project" value="InterPro"/>
</dbReference>
<dbReference type="GO" id="GO:0003989">
    <property type="term" value="F:acetyl-CoA carboxylase activity"/>
    <property type="evidence" value="ECO:0007669"/>
    <property type="project" value="InterPro"/>
</dbReference>
<dbReference type="GO" id="GO:0005524">
    <property type="term" value="F:ATP binding"/>
    <property type="evidence" value="ECO:0007669"/>
    <property type="project" value="UniProtKB-KW"/>
</dbReference>
<dbReference type="GO" id="GO:0016743">
    <property type="term" value="F:carboxyl- or carbamoyltransferase activity"/>
    <property type="evidence" value="ECO:0007669"/>
    <property type="project" value="UniProtKB-UniRule"/>
</dbReference>
<dbReference type="GO" id="GO:0008270">
    <property type="term" value="F:zinc ion binding"/>
    <property type="evidence" value="ECO:0007669"/>
    <property type="project" value="UniProtKB-UniRule"/>
</dbReference>
<dbReference type="GO" id="GO:0006633">
    <property type="term" value="P:fatty acid biosynthetic process"/>
    <property type="evidence" value="ECO:0007669"/>
    <property type="project" value="UniProtKB-KW"/>
</dbReference>
<dbReference type="GO" id="GO:2001295">
    <property type="term" value="P:malonyl-CoA biosynthetic process"/>
    <property type="evidence" value="ECO:0007669"/>
    <property type="project" value="UniProtKB-UniRule"/>
</dbReference>
<dbReference type="Gene3D" id="3.90.226.10">
    <property type="entry name" value="2-enoyl-CoA Hydratase, Chain A, domain 1"/>
    <property type="match status" value="1"/>
</dbReference>
<dbReference type="HAMAP" id="MF_01395">
    <property type="entry name" value="AcetylCoA_CT_beta"/>
    <property type="match status" value="1"/>
</dbReference>
<dbReference type="InterPro" id="IPR034733">
    <property type="entry name" value="AcCoA_carboxyl_beta"/>
</dbReference>
<dbReference type="InterPro" id="IPR000438">
    <property type="entry name" value="Acetyl_CoA_COase_Trfase_b_su"/>
</dbReference>
<dbReference type="InterPro" id="IPR029045">
    <property type="entry name" value="ClpP/crotonase-like_dom_sf"/>
</dbReference>
<dbReference type="InterPro" id="IPR011762">
    <property type="entry name" value="COA_CT_N"/>
</dbReference>
<dbReference type="InterPro" id="IPR041010">
    <property type="entry name" value="Znf-ACC"/>
</dbReference>
<dbReference type="NCBIfam" id="TIGR00515">
    <property type="entry name" value="accD"/>
    <property type="match status" value="1"/>
</dbReference>
<dbReference type="PANTHER" id="PTHR42995">
    <property type="entry name" value="ACETYL-COENZYME A CARBOXYLASE CARBOXYL TRANSFERASE SUBUNIT BETA, CHLOROPLASTIC"/>
    <property type="match status" value="1"/>
</dbReference>
<dbReference type="PANTHER" id="PTHR42995:SF5">
    <property type="entry name" value="ACETYL-COENZYME A CARBOXYLASE CARBOXYL TRANSFERASE SUBUNIT BETA, CHLOROPLASTIC"/>
    <property type="match status" value="1"/>
</dbReference>
<dbReference type="Pfam" id="PF01039">
    <property type="entry name" value="Carboxyl_trans"/>
    <property type="match status" value="1"/>
</dbReference>
<dbReference type="Pfam" id="PF17848">
    <property type="entry name" value="Zn_ribbon_ACC"/>
    <property type="match status" value="1"/>
</dbReference>
<dbReference type="PRINTS" id="PR01070">
    <property type="entry name" value="ACCCTRFRASEB"/>
</dbReference>
<dbReference type="SUPFAM" id="SSF52096">
    <property type="entry name" value="ClpP/crotonase"/>
    <property type="match status" value="1"/>
</dbReference>
<dbReference type="PROSITE" id="PS50980">
    <property type="entry name" value="COA_CT_NTER"/>
    <property type="match status" value="1"/>
</dbReference>
<name>ACCD2_LYSSC</name>
<protein>
    <recommendedName>
        <fullName evidence="1">Acetyl-coenzyme A carboxylase carboxyl transferase subunit beta 2</fullName>
        <shortName evidence="1">ACCase subunit beta 2</shortName>
        <shortName evidence="1">Acetyl-CoA carboxylase carboxyltransferase subunit beta 2</shortName>
        <ecNumber evidence="1">2.1.3.15</ecNumber>
    </recommendedName>
</protein>
<comment type="function">
    <text evidence="1">Component of the acetyl coenzyme A carboxylase (ACC) complex. Biotin carboxylase (BC) catalyzes the carboxylation of biotin on its carrier protein (BCCP) and then the CO(2) group is transferred by the transcarboxylase to acetyl-CoA to form malonyl-CoA.</text>
</comment>
<comment type="catalytic activity">
    <reaction evidence="1">
        <text>N(6)-carboxybiotinyl-L-lysyl-[protein] + acetyl-CoA = N(6)-biotinyl-L-lysyl-[protein] + malonyl-CoA</text>
        <dbReference type="Rhea" id="RHEA:54728"/>
        <dbReference type="Rhea" id="RHEA-COMP:10505"/>
        <dbReference type="Rhea" id="RHEA-COMP:10506"/>
        <dbReference type="ChEBI" id="CHEBI:57288"/>
        <dbReference type="ChEBI" id="CHEBI:57384"/>
        <dbReference type="ChEBI" id="CHEBI:83144"/>
        <dbReference type="ChEBI" id="CHEBI:83145"/>
        <dbReference type="EC" id="2.1.3.15"/>
    </reaction>
</comment>
<comment type="cofactor">
    <cofactor evidence="1">
        <name>Zn(2+)</name>
        <dbReference type="ChEBI" id="CHEBI:29105"/>
    </cofactor>
    <text evidence="1">Binds 1 zinc ion per subunit.</text>
</comment>
<comment type="pathway">
    <text evidence="1">Lipid metabolism; malonyl-CoA biosynthesis; malonyl-CoA from acetyl-CoA: step 1/1.</text>
</comment>
<comment type="subunit">
    <text evidence="1">Acetyl-CoA carboxylase is a heterohexamer composed of biotin carboxyl carrier protein (AccB), biotin carboxylase (AccC) and two subunits each of ACCase subunit alpha (AccA) and ACCase subunit beta (AccD).</text>
</comment>
<comment type="subcellular location">
    <subcellularLocation>
        <location evidence="1">Cytoplasm</location>
    </subcellularLocation>
</comment>
<comment type="similarity">
    <text evidence="1">Belongs to the AccD/PCCB family.</text>
</comment>
<proteinExistence type="inferred from homology"/>
<feature type="chain" id="PRO_0000389788" description="Acetyl-coenzyme A carboxylase carboxyl transferase subunit beta 2">
    <location>
        <begin position="1"/>
        <end position="285"/>
    </location>
</feature>
<feature type="domain" description="CoA carboxyltransferase N-terminal" evidence="2">
    <location>
        <begin position="26"/>
        <end position="285"/>
    </location>
</feature>
<feature type="zinc finger region" description="C4-type" evidence="1">
    <location>
        <begin position="30"/>
        <end position="52"/>
    </location>
</feature>
<feature type="region of interest" description="Disordered" evidence="3">
    <location>
        <begin position="1"/>
        <end position="20"/>
    </location>
</feature>
<feature type="binding site" evidence="1">
    <location>
        <position position="30"/>
    </location>
    <ligand>
        <name>Zn(2+)</name>
        <dbReference type="ChEBI" id="CHEBI:29105"/>
    </ligand>
</feature>
<feature type="binding site" evidence="1">
    <location>
        <position position="33"/>
    </location>
    <ligand>
        <name>Zn(2+)</name>
        <dbReference type="ChEBI" id="CHEBI:29105"/>
    </ligand>
</feature>
<feature type="binding site" evidence="1">
    <location>
        <position position="49"/>
    </location>
    <ligand>
        <name>Zn(2+)</name>
        <dbReference type="ChEBI" id="CHEBI:29105"/>
    </ligand>
</feature>
<feature type="binding site" evidence="1">
    <location>
        <position position="52"/>
    </location>
    <ligand>
        <name>Zn(2+)</name>
        <dbReference type="ChEBI" id="CHEBI:29105"/>
    </ligand>
</feature>
<accession>B1HX17</accession>
<gene>
    <name evidence="1" type="primary">accD2</name>
    <name type="ordered locus">Bsph_4132</name>
</gene>
<reference key="1">
    <citation type="journal article" date="2008" name="J. Bacteriol.">
        <title>Complete genome sequence of the mosquitocidal bacterium Bacillus sphaericus C3-41 and comparison with those of closely related Bacillus species.</title>
        <authorList>
            <person name="Hu X."/>
            <person name="Fan W."/>
            <person name="Han B."/>
            <person name="Liu H."/>
            <person name="Zheng D."/>
            <person name="Li Q."/>
            <person name="Dong W."/>
            <person name="Yan J."/>
            <person name="Gao M."/>
            <person name="Berry C."/>
            <person name="Yuan Z."/>
        </authorList>
    </citation>
    <scope>NUCLEOTIDE SEQUENCE [LARGE SCALE GENOMIC DNA]</scope>
    <source>
        <strain>C3-41</strain>
    </source>
</reference>
<organism>
    <name type="scientific">Lysinibacillus sphaericus (strain C3-41)</name>
    <dbReference type="NCBI Taxonomy" id="444177"/>
    <lineage>
        <taxon>Bacteria</taxon>
        <taxon>Bacillati</taxon>
        <taxon>Bacillota</taxon>
        <taxon>Bacilli</taxon>
        <taxon>Bacillales</taxon>
        <taxon>Bacillaceae</taxon>
        <taxon>Lysinibacillus</taxon>
    </lineage>
</organism>
<keyword id="KW-0067">ATP-binding</keyword>
<keyword id="KW-0963">Cytoplasm</keyword>
<keyword id="KW-0275">Fatty acid biosynthesis</keyword>
<keyword id="KW-0276">Fatty acid metabolism</keyword>
<keyword id="KW-0444">Lipid biosynthesis</keyword>
<keyword id="KW-0443">Lipid metabolism</keyword>
<keyword id="KW-0479">Metal-binding</keyword>
<keyword id="KW-0547">Nucleotide-binding</keyword>
<keyword id="KW-0808">Transferase</keyword>
<keyword id="KW-0862">Zinc</keyword>
<keyword id="KW-0863">Zinc-finger</keyword>
<sequence>MAIRSLFSGNRKKKEDGQEKAFPEGLMTKCPECRHIQLTKELEKNHKVCTKCSHHFKMTAQERVDYFLDEGSFVSMDDHLQTSNPLNFPAYVEKISADQEKTGLNEAVLTGVGTLDGEEIVVAIMDSHFRMGSMGSVVGEKITRAVEKATELGVPFIIFTASGGARMQEGVLSLMQMAKTSVALKRHSDQGLLFISILTHPTTGGVSASFASVGDINIAEPQALIGFAGRRVIEETVREKLPNDFQTAEFLLEHGQLDAIFPRKDLRKQVSLLVKMHTKGGVQHV</sequence>